<keyword id="KW-0217">Developmental protein</keyword>
<keyword id="KW-0238">DNA-binding</keyword>
<keyword id="KW-0287">Flowering</keyword>
<keyword id="KW-0539">Nucleus</keyword>
<keyword id="KW-1185">Reference proteome</keyword>
<keyword id="KW-0804">Transcription</keyword>
<keyword id="KW-0805">Transcription regulation</keyword>
<organism>
    <name type="scientific">Arabidopsis thaliana</name>
    <name type="common">Mouse-ear cress</name>
    <dbReference type="NCBI Taxonomy" id="3702"/>
    <lineage>
        <taxon>Eukaryota</taxon>
        <taxon>Viridiplantae</taxon>
        <taxon>Streptophyta</taxon>
        <taxon>Embryophyta</taxon>
        <taxon>Tracheophyta</taxon>
        <taxon>Spermatophyta</taxon>
        <taxon>Magnoliopsida</taxon>
        <taxon>eudicotyledons</taxon>
        <taxon>Gunneridae</taxon>
        <taxon>Pentapetalae</taxon>
        <taxon>rosids</taxon>
        <taxon>malvids</taxon>
        <taxon>Brassicales</taxon>
        <taxon>Brassicaceae</taxon>
        <taxon>Camelineae</taxon>
        <taxon>Arabidopsis</taxon>
    </lineage>
</organism>
<accession>O82743</accession>
<sequence>MVRGKTEMKRIENATSRQVTFSKRRNGLLKKAFELSVLCDAEVALVIFSPRSKLYEFSSSSIAATIERYQRRIKEIGNNHKRNDNSQQARDETSGLTKKIEQLEISKRKLLGEGIDACSIEELQQLENQLDRSLSRIRAKKYQLLREEIEKLKAEERNLVKENKDLKEKWLGMGTATIASSQSTLSSSEVNIDDNMEVETGLFIGPPETRQSKKFPPQN</sequence>
<evidence type="ECO:0000255" key="1">
    <source>
        <dbReference type="PROSITE-ProRule" id="PRU00251"/>
    </source>
</evidence>
<evidence type="ECO:0000255" key="2">
    <source>
        <dbReference type="PROSITE-ProRule" id="PRU00629"/>
    </source>
</evidence>
<evidence type="ECO:0000256" key="3">
    <source>
        <dbReference type="SAM" id="MobiDB-lite"/>
    </source>
</evidence>
<evidence type="ECO:0000269" key="4">
    <source>
    </source>
</evidence>
<evidence type="ECO:0000269" key="5">
    <source>
    </source>
</evidence>
<evidence type="ECO:0000269" key="6">
    <source>
    </source>
</evidence>
<evidence type="ECO:0000269" key="7">
    <source>
    </source>
</evidence>
<evidence type="ECO:0000269" key="8">
    <source>
    </source>
</evidence>
<proteinExistence type="evidence at protein level"/>
<name>AGL19_ARATH</name>
<protein>
    <recommendedName>
        <fullName>Agamous-like MADS-box protein AGL19</fullName>
    </recommendedName>
</protein>
<dbReference type="EMBL" id="AF312664">
    <property type="protein sequence ID" value="AAG37901.1"/>
    <property type="molecule type" value="mRNA"/>
</dbReference>
<dbReference type="EMBL" id="AL031018">
    <property type="protein sequence ID" value="CAA19810.1"/>
    <property type="molecule type" value="Genomic_DNA"/>
</dbReference>
<dbReference type="EMBL" id="AL161558">
    <property type="protein sequence ID" value="CAB79250.1"/>
    <property type="molecule type" value="Genomic_DNA"/>
</dbReference>
<dbReference type="EMBL" id="CP002687">
    <property type="protein sequence ID" value="AEE84684.1"/>
    <property type="molecule type" value="Genomic_DNA"/>
</dbReference>
<dbReference type="EMBL" id="CP002687">
    <property type="protein sequence ID" value="ANM66284.1"/>
    <property type="molecule type" value="Genomic_DNA"/>
</dbReference>
<dbReference type="EMBL" id="AY142523">
    <property type="protein sequence ID" value="AAN13066.1"/>
    <property type="molecule type" value="mRNA"/>
</dbReference>
<dbReference type="PIR" id="T05126">
    <property type="entry name" value="T05126"/>
</dbReference>
<dbReference type="RefSeq" id="NP_001320037.1">
    <property type="nucleotide sequence ID" value="NM_001341568.1"/>
</dbReference>
<dbReference type="RefSeq" id="NP_194026.1">
    <property type="nucleotide sequence ID" value="NM_118424.2"/>
</dbReference>
<dbReference type="SMR" id="O82743"/>
<dbReference type="BioGRID" id="13683">
    <property type="interactions" value="2"/>
</dbReference>
<dbReference type="FunCoup" id="O82743">
    <property type="interactions" value="31"/>
</dbReference>
<dbReference type="IntAct" id="O82743">
    <property type="interactions" value="2"/>
</dbReference>
<dbReference type="STRING" id="3702.O82743"/>
<dbReference type="iPTMnet" id="O82743"/>
<dbReference type="PaxDb" id="3702-AT4G22950.1"/>
<dbReference type="EnsemblPlants" id="AT4G22950.1">
    <property type="protein sequence ID" value="AT4G22950.1"/>
    <property type="gene ID" value="AT4G22950"/>
</dbReference>
<dbReference type="EnsemblPlants" id="AT4G22950.3">
    <property type="protein sequence ID" value="AT4G22950.3"/>
    <property type="gene ID" value="AT4G22950"/>
</dbReference>
<dbReference type="GeneID" id="828394"/>
<dbReference type="Gramene" id="AT4G22950.1">
    <property type="protein sequence ID" value="AT4G22950.1"/>
    <property type="gene ID" value="AT4G22950"/>
</dbReference>
<dbReference type="Gramene" id="AT4G22950.3">
    <property type="protein sequence ID" value="AT4G22950.3"/>
    <property type="gene ID" value="AT4G22950"/>
</dbReference>
<dbReference type="KEGG" id="ath:AT4G22950"/>
<dbReference type="Araport" id="AT4G22950"/>
<dbReference type="TAIR" id="AT4G22950">
    <property type="gene designation" value="AGL19"/>
</dbReference>
<dbReference type="eggNOG" id="KOG0014">
    <property type="taxonomic scope" value="Eukaryota"/>
</dbReference>
<dbReference type="HOGENOM" id="CLU_053053_0_4_1"/>
<dbReference type="InParanoid" id="O82743"/>
<dbReference type="PhylomeDB" id="O82743"/>
<dbReference type="PRO" id="PR:O82743"/>
<dbReference type="Proteomes" id="UP000006548">
    <property type="component" value="Chromosome 4"/>
</dbReference>
<dbReference type="ExpressionAtlas" id="O82743">
    <property type="expression patterns" value="baseline and differential"/>
</dbReference>
<dbReference type="GO" id="GO:0005634">
    <property type="term" value="C:nucleus"/>
    <property type="evidence" value="ECO:0000314"/>
    <property type="project" value="TAIR"/>
</dbReference>
<dbReference type="GO" id="GO:0003700">
    <property type="term" value="F:DNA-binding transcription factor activity"/>
    <property type="evidence" value="ECO:0000250"/>
    <property type="project" value="TAIR"/>
</dbReference>
<dbReference type="GO" id="GO:0046983">
    <property type="term" value="F:protein dimerization activity"/>
    <property type="evidence" value="ECO:0007669"/>
    <property type="project" value="InterPro"/>
</dbReference>
<dbReference type="GO" id="GO:0000977">
    <property type="term" value="F:RNA polymerase II transcription regulatory region sequence-specific DNA binding"/>
    <property type="evidence" value="ECO:0007669"/>
    <property type="project" value="InterPro"/>
</dbReference>
<dbReference type="GO" id="GO:0009908">
    <property type="term" value="P:flower development"/>
    <property type="evidence" value="ECO:0007669"/>
    <property type="project" value="UniProtKB-KW"/>
</dbReference>
<dbReference type="GO" id="GO:0045944">
    <property type="term" value="P:positive regulation of transcription by RNA polymerase II"/>
    <property type="evidence" value="ECO:0007669"/>
    <property type="project" value="InterPro"/>
</dbReference>
<dbReference type="GO" id="GO:0048510">
    <property type="term" value="P:regulation of timing of transition from vegetative to reproductive phase"/>
    <property type="evidence" value="ECO:0000315"/>
    <property type="project" value="TAIR"/>
</dbReference>
<dbReference type="GO" id="GO:0010048">
    <property type="term" value="P:vernalization response"/>
    <property type="evidence" value="ECO:0000315"/>
    <property type="project" value="TAIR"/>
</dbReference>
<dbReference type="CDD" id="cd00265">
    <property type="entry name" value="MADS_MEF2_like"/>
    <property type="match status" value="1"/>
</dbReference>
<dbReference type="FunFam" id="3.40.1810.10:FF:000012">
    <property type="entry name" value="MADS-box protein SOC1"/>
    <property type="match status" value="1"/>
</dbReference>
<dbReference type="Gene3D" id="3.40.1810.10">
    <property type="entry name" value="Transcription factor, MADS-box"/>
    <property type="match status" value="1"/>
</dbReference>
<dbReference type="InterPro" id="IPR050142">
    <property type="entry name" value="MADS-box/MEF2_TF"/>
</dbReference>
<dbReference type="InterPro" id="IPR033896">
    <property type="entry name" value="MEF2-like_N"/>
</dbReference>
<dbReference type="InterPro" id="IPR002487">
    <property type="entry name" value="TF_Kbox"/>
</dbReference>
<dbReference type="InterPro" id="IPR002100">
    <property type="entry name" value="TF_MADSbox"/>
</dbReference>
<dbReference type="InterPro" id="IPR036879">
    <property type="entry name" value="TF_MADSbox_sf"/>
</dbReference>
<dbReference type="PANTHER" id="PTHR48019">
    <property type="entry name" value="SERUM RESPONSE FACTOR HOMOLOG"/>
    <property type="match status" value="1"/>
</dbReference>
<dbReference type="Pfam" id="PF01486">
    <property type="entry name" value="K-box"/>
    <property type="match status" value="1"/>
</dbReference>
<dbReference type="Pfam" id="PF00319">
    <property type="entry name" value="SRF-TF"/>
    <property type="match status" value="1"/>
</dbReference>
<dbReference type="PRINTS" id="PR00404">
    <property type="entry name" value="MADSDOMAIN"/>
</dbReference>
<dbReference type="SMART" id="SM00432">
    <property type="entry name" value="MADS"/>
    <property type="match status" value="1"/>
</dbReference>
<dbReference type="SUPFAM" id="SSF55455">
    <property type="entry name" value="SRF-like"/>
    <property type="match status" value="1"/>
</dbReference>
<dbReference type="PROSITE" id="PS51297">
    <property type="entry name" value="K_BOX"/>
    <property type="match status" value="1"/>
</dbReference>
<dbReference type="PROSITE" id="PS00350">
    <property type="entry name" value="MADS_BOX_1"/>
    <property type="match status" value="1"/>
</dbReference>
<dbReference type="PROSITE" id="PS50066">
    <property type="entry name" value="MADS_BOX_2"/>
    <property type="match status" value="1"/>
</dbReference>
<comment type="function">
    <text evidence="8">Probable transcription factor that promotes flowering, especially in response to vernalization by short periods of cold, in an FLC-inpedendent manner.</text>
</comment>
<comment type="subunit">
    <text evidence="7">Interacts with SOC1 and AGL21.</text>
</comment>
<comment type="subcellular location">
    <subcellularLocation>
        <location evidence="1 8">Nucleus</location>
    </subcellularLocation>
</comment>
<comment type="tissue specificity">
    <text evidence="4 5 6 8">Mostly expressed in the outer layers of the root meristem (lateral root cap and epidermis) and in the central cylinder cells of mature roots. Also present in rosette leaves and seedlings and, to a lesser extent, in cauline leaves and flowers. Enriched in apices including the shoot apical meristem and developing leaf primordia.</text>
</comment>
<comment type="induction">
    <text evidence="8">Maintained at very low levels by the polycomb-group (PcG) proteins MSI1, CLF, and EMF2 via histone methylation (H3K27me3). Derepressed upon cold treatment (vernalization).</text>
</comment>
<comment type="disruption phenotype">
    <text evidence="8">Decreased response to vernalization, the promotion of flowering by prolonged cold.</text>
</comment>
<feature type="chain" id="PRO_0000199477" description="Agamous-like MADS-box protein AGL19">
    <location>
        <begin position="1"/>
        <end position="219"/>
    </location>
</feature>
<feature type="domain" description="MADS-box" evidence="1">
    <location>
        <begin position="1"/>
        <end position="61"/>
    </location>
</feature>
<feature type="domain" description="K-box" evidence="2">
    <location>
        <begin position="86"/>
        <end position="176"/>
    </location>
</feature>
<feature type="region of interest" description="Disordered" evidence="3">
    <location>
        <begin position="77"/>
        <end position="96"/>
    </location>
</feature>
<reference key="1">
    <citation type="journal article" date="2000" name="Plant J.">
        <title>MADS-box gene evolution beyond flowers: expression in pollen, endosperm, guard cells, roots and trichomes.</title>
        <authorList>
            <person name="Alvarez-Buylla E.R."/>
            <person name="Liljegren S.J."/>
            <person name="Pelaz S."/>
            <person name="Gold S.E."/>
            <person name="Burgeff C."/>
            <person name="Ditta G.S."/>
            <person name="Vergara-Silva F."/>
            <person name="Yanofsky M.F."/>
        </authorList>
    </citation>
    <scope>NUCLEOTIDE SEQUENCE [MRNA]</scope>
    <scope>TISSUE SPECIFICITY</scope>
    <source>
        <strain>cv. Columbia</strain>
        <tissue>Root</tissue>
    </source>
</reference>
<reference key="2">
    <citation type="journal article" date="1999" name="Nature">
        <title>Sequence and analysis of chromosome 4 of the plant Arabidopsis thaliana.</title>
        <authorList>
            <person name="Mayer K.F.X."/>
            <person name="Schueller C."/>
            <person name="Wambutt R."/>
            <person name="Murphy G."/>
            <person name="Volckaert G."/>
            <person name="Pohl T."/>
            <person name="Duesterhoeft A."/>
            <person name="Stiekema W."/>
            <person name="Entian K.-D."/>
            <person name="Terryn N."/>
            <person name="Harris B."/>
            <person name="Ansorge W."/>
            <person name="Brandt P."/>
            <person name="Grivell L.A."/>
            <person name="Rieger M."/>
            <person name="Weichselgartner M."/>
            <person name="de Simone V."/>
            <person name="Obermaier B."/>
            <person name="Mache R."/>
            <person name="Mueller M."/>
            <person name="Kreis M."/>
            <person name="Delseny M."/>
            <person name="Puigdomenech P."/>
            <person name="Watson M."/>
            <person name="Schmidtheini T."/>
            <person name="Reichert B."/>
            <person name="Portetelle D."/>
            <person name="Perez-Alonso M."/>
            <person name="Boutry M."/>
            <person name="Bancroft I."/>
            <person name="Vos P."/>
            <person name="Hoheisel J."/>
            <person name="Zimmermann W."/>
            <person name="Wedler H."/>
            <person name="Ridley P."/>
            <person name="Langham S.-A."/>
            <person name="McCullagh B."/>
            <person name="Bilham L."/>
            <person name="Robben J."/>
            <person name="van der Schueren J."/>
            <person name="Grymonprez B."/>
            <person name="Chuang Y.-J."/>
            <person name="Vandenbussche F."/>
            <person name="Braeken M."/>
            <person name="Weltjens I."/>
            <person name="Voet M."/>
            <person name="Bastiaens I."/>
            <person name="Aert R."/>
            <person name="Defoor E."/>
            <person name="Weitzenegger T."/>
            <person name="Bothe G."/>
            <person name="Ramsperger U."/>
            <person name="Hilbert H."/>
            <person name="Braun M."/>
            <person name="Holzer E."/>
            <person name="Brandt A."/>
            <person name="Peters S."/>
            <person name="van Staveren M."/>
            <person name="Dirkse W."/>
            <person name="Mooijman P."/>
            <person name="Klein Lankhorst R."/>
            <person name="Rose M."/>
            <person name="Hauf J."/>
            <person name="Koetter P."/>
            <person name="Berneiser S."/>
            <person name="Hempel S."/>
            <person name="Feldpausch M."/>
            <person name="Lamberth S."/>
            <person name="Van den Daele H."/>
            <person name="De Keyser A."/>
            <person name="Buysshaert C."/>
            <person name="Gielen J."/>
            <person name="Villarroel R."/>
            <person name="De Clercq R."/>
            <person name="van Montagu M."/>
            <person name="Rogers J."/>
            <person name="Cronin A."/>
            <person name="Quail M.A."/>
            <person name="Bray-Allen S."/>
            <person name="Clark L."/>
            <person name="Doggett J."/>
            <person name="Hall S."/>
            <person name="Kay M."/>
            <person name="Lennard N."/>
            <person name="McLay K."/>
            <person name="Mayes R."/>
            <person name="Pettett A."/>
            <person name="Rajandream M.A."/>
            <person name="Lyne M."/>
            <person name="Benes V."/>
            <person name="Rechmann S."/>
            <person name="Borkova D."/>
            <person name="Bloecker H."/>
            <person name="Scharfe M."/>
            <person name="Grimm M."/>
            <person name="Loehnert T.-H."/>
            <person name="Dose S."/>
            <person name="de Haan M."/>
            <person name="Maarse A.C."/>
            <person name="Schaefer M."/>
            <person name="Mueller-Auer S."/>
            <person name="Gabel C."/>
            <person name="Fuchs M."/>
            <person name="Fartmann B."/>
            <person name="Granderath K."/>
            <person name="Dauner D."/>
            <person name="Herzl A."/>
            <person name="Neumann S."/>
            <person name="Argiriou A."/>
            <person name="Vitale D."/>
            <person name="Liguori R."/>
            <person name="Piravandi E."/>
            <person name="Massenet O."/>
            <person name="Quigley F."/>
            <person name="Clabauld G."/>
            <person name="Muendlein A."/>
            <person name="Felber R."/>
            <person name="Schnabl S."/>
            <person name="Hiller R."/>
            <person name="Schmidt W."/>
            <person name="Lecharny A."/>
            <person name="Aubourg S."/>
            <person name="Chefdor F."/>
            <person name="Cooke R."/>
            <person name="Berger C."/>
            <person name="Monfort A."/>
            <person name="Casacuberta E."/>
            <person name="Gibbons T."/>
            <person name="Weber N."/>
            <person name="Vandenbol M."/>
            <person name="Bargues M."/>
            <person name="Terol J."/>
            <person name="Torres A."/>
            <person name="Perez-Perez A."/>
            <person name="Purnelle B."/>
            <person name="Bent E."/>
            <person name="Johnson S."/>
            <person name="Tacon D."/>
            <person name="Jesse T."/>
            <person name="Heijnen L."/>
            <person name="Schwarz S."/>
            <person name="Scholler P."/>
            <person name="Heber S."/>
            <person name="Francs P."/>
            <person name="Bielke C."/>
            <person name="Frishman D."/>
            <person name="Haase D."/>
            <person name="Lemcke K."/>
            <person name="Mewes H.-W."/>
            <person name="Stocker S."/>
            <person name="Zaccaria P."/>
            <person name="Bevan M."/>
            <person name="Wilson R.K."/>
            <person name="de la Bastide M."/>
            <person name="Habermann K."/>
            <person name="Parnell L."/>
            <person name="Dedhia N."/>
            <person name="Gnoj L."/>
            <person name="Schutz K."/>
            <person name="Huang E."/>
            <person name="Spiegel L."/>
            <person name="Sekhon M."/>
            <person name="Murray J."/>
            <person name="Sheet P."/>
            <person name="Cordes M."/>
            <person name="Abu-Threideh J."/>
            <person name="Stoneking T."/>
            <person name="Kalicki J."/>
            <person name="Graves T."/>
            <person name="Harmon G."/>
            <person name="Edwards J."/>
            <person name="Latreille P."/>
            <person name="Courtney L."/>
            <person name="Cloud J."/>
            <person name="Abbott A."/>
            <person name="Scott K."/>
            <person name="Johnson D."/>
            <person name="Minx P."/>
            <person name="Bentley D."/>
            <person name="Fulton B."/>
            <person name="Miller N."/>
            <person name="Greco T."/>
            <person name="Kemp K."/>
            <person name="Kramer J."/>
            <person name="Fulton L."/>
            <person name="Mardis E."/>
            <person name="Dante M."/>
            <person name="Pepin K."/>
            <person name="Hillier L.W."/>
            <person name="Nelson J."/>
            <person name="Spieth J."/>
            <person name="Ryan E."/>
            <person name="Andrews S."/>
            <person name="Geisel C."/>
            <person name="Layman D."/>
            <person name="Du H."/>
            <person name="Ali J."/>
            <person name="Berghoff A."/>
            <person name="Jones K."/>
            <person name="Drone K."/>
            <person name="Cotton M."/>
            <person name="Joshu C."/>
            <person name="Antonoiu B."/>
            <person name="Zidanic M."/>
            <person name="Strong C."/>
            <person name="Sun H."/>
            <person name="Lamar B."/>
            <person name="Yordan C."/>
            <person name="Ma P."/>
            <person name="Zhong J."/>
            <person name="Preston R."/>
            <person name="Vil D."/>
            <person name="Shekher M."/>
            <person name="Matero A."/>
            <person name="Shah R."/>
            <person name="Swaby I.K."/>
            <person name="O'Shaughnessy A."/>
            <person name="Rodriguez M."/>
            <person name="Hoffman J."/>
            <person name="Till S."/>
            <person name="Granat S."/>
            <person name="Shohdy N."/>
            <person name="Hasegawa A."/>
            <person name="Hameed A."/>
            <person name="Lodhi M."/>
            <person name="Johnson A."/>
            <person name="Chen E."/>
            <person name="Marra M.A."/>
            <person name="Martienssen R."/>
            <person name="McCombie W.R."/>
        </authorList>
    </citation>
    <scope>NUCLEOTIDE SEQUENCE [LARGE SCALE GENOMIC DNA]</scope>
    <source>
        <strain>cv. Columbia</strain>
    </source>
</reference>
<reference key="3">
    <citation type="journal article" date="2017" name="Plant J.">
        <title>Araport11: a complete reannotation of the Arabidopsis thaliana reference genome.</title>
        <authorList>
            <person name="Cheng C.Y."/>
            <person name="Krishnakumar V."/>
            <person name="Chan A.P."/>
            <person name="Thibaud-Nissen F."/>
            <person name="Schobel S."/>
            <person name="Town C.D."/>
        </authorList>
    </citation>
    <scope>GENOME REANNOTATION</scope>
    <source>
        <strain>cv. Columbia</strain>
    </source>
</reference>
<reference key="4">
    <citation type="journal article" date="2003" name="Science">
        <title>Empirical analysis of transcriptional activity in the Arabidopsis genome.</title>
        <authorList>
            <person name="Yamada K."/>
            <person name="Lim J."/>
            <person name="Dale J.M."/>
            <person name="Chen H."/>
            <person name="Shinn P."/>
            <person name="Palm C.J."/>
            <person name="Southwick A.M."/>
            <person name="Wu H.C."/>
            <person name="Kim C.J."/>
            <person name="Nguyen M."/>
            <person name="Pham P.K."/>
            <person name="Cheuk R.F."/>
            <person name="Karlin-Newmann G."/>
            <person name="Liu S.X."/>
            <person name="Lam B."/>
            <person name="Sakano H."/>
            <person name="Wu T."/>
            <person name="Yu G."/>
            <person name="Miranda M."/>
            <person name="Quach H.L."/>
            <person name="Tripp M."/>
            <person name="Chang C.H."/>
            <person name="Lee J.M."/>
            <person name="Toriumi M.J."/>
            <person name="Chan M.M."/>
            <person name="Tang C.C."/>
            <person name="Onodera C.S."/>
            <person name="Deng J.M."/>
            <person name="Akiyama K."/>
            <person name="Ansari Y."/>
            <person name="Arakawa T."/>
            <person name="Banh J."/>
            <person name="Banno F."/>
            <person name="Bowser L."/>
            <person name="Brooks S.Y."/>
            <person name="Carninci P."/>
            <person name="Chao Q."/>
            <person name="Choy N."/>
            <person name="Enju A."/>
            <person name="Goldsmith A.D."/>
            <person name="Gurjal M."/>
            <person name="Hansen N.F."/>
            <person name="Hayashizaki Y."/>
            <person name="Johnson-Hopson C."/>
            <person name="Hsuan V.W."/>
            <person name="Iida K."/>
            <person name="Karnes M."/>
            <person name="Khan S."/>
            <person name="Koesema E."/>
            <person name="Ishida J."/>
            <person name="Jiang P.X."/>
            <person name="Jones T."/>
            <person name="Kawai J."/>
            <person name="Kamiya A."/>
            <person name="Meyers C."/>
            <person name="Nakajima M."/>
            <person name="Narusaka M."/>
            <person name="Seki M."/>
            <person name="Sakurai T."/>
            <person name="Satou M."/>
            <person name="Tamse R."/>
            <person name="Vaysberg M."/>
            <person name="Wallender E.K."/>
            <person name="Wong C."/>
            <person name="Yamamura Y."/>
            <person name="Yuan S."/>
            <person name="Shinozaki K."/>
            <person name="Davis R.W."/>
            <person name="Theologis A."/>
            <person name="Ecker J.R."/>
        </authorList>
    </citation>
    <scope>NUCLEOTIDE SEQUENCE [LARGE SCALE MRNA]</scope>
    <source>
        <strain>cv. Columbia</strain>
    </source>
</reference>
<reference key="5">
    <citation type="journal article" date="2003" name="Mol. Biol. Evol.">
        <title>Evolution and divergence of the MADS-box gene family based on genome-wide expression analyses.</title>
        <authorList>
            <person name="Kofuji R."/>
            <person name="Sumikawa N."/>
            <person name="Yamasaki M."/>
            <person name="Kondo K."/>
            <person name="Ueda K."/>
            <person name="Ito M."/>
            <person name="Hasebe M."/>
        </authorList>
    </citation>
    <scope>TISSUE SPECIFICITY</scope>
    <scope>GENE FAMILY</scope>
    <source>
        <strain>cv. Columbia</strain>
    </source>
</reference>
<reference key="6">
    <citation type="journal article" date="2003" name="Plant Cell">
        <title>Molecular and phylogenetic analyses of the complete MADS-box transcription factor family in Arabidopsis: new openings to the MADS world.</title>
        <authorList>
            <person name="Parenicova L."/>
            <person name="de Folter S."/>
            <person name="Kieffer M."/>
            <person name="Horner D.S."/>
            <person name="Favalli C."/>
            <person name="Busscher J."/>
            <person name="Cook H.E."/>
            <person name="Ingram R.M."/>
            <person name="Kater M.M."/>
            <person name="Davies B."/>
            <person name="Angenent G.C."/>
            <person name="Colombo L."/>
        </authorList>
    </citation>
    <scope>TISSUE SPECIFICITY</scope>
    <scope>GENE FAMILY</scope>
    <source>
        <strain>cv. Columbia</strain>
        <tissue>Rosette leaf</tissue>
    </source>
</reference>
<reference key="7">
    <citation type="journal article" date="2005" name="Plant Cell">
        <title>Comprehensive interaction map of the Arabidopsis MADS Box transcription factors.</title>
        <authorList>
            <person name="de Folter S."/>
            <person name="Immink R.G.H."/>
            <person name="Kieffer M."/>
            <person name="Parenicova L."/>
            <person name="Henz S.R."/>
            <person name="Weigel D."/>
            <person name="Busscher M."/>
            <person name="Kooiker M."/>
            <person name="Colombo L."/>
            <person name="Kater M.M."/>
            <person name="Davies B."/>
            <person name="Angenent G.C."/>
        </authorList>
    </citation>
    <scope>INTERACTION WITH SOC1 AND AGL21</scope>
</reference>
<reference key="8">
    <citation type="journal article" date="2006" name="Genes Dev.">
        <title>Polycomb-group proteins repress the floral activator AGL19 in the FLC-independent vernalization pathway.</title>
        <authorList>
            <person name="Schoenrock N."/>
            <person name="Bouveret R."/>
            <person name="Leroy O."/>
            <person name="Borghi L."/>
            <person name="Koehler C."/>
            <person name="Gruissem W."/>
            <person name="Hennig L."/>
        </authorList>
    </citation>
    <scope>FUNCTION</scope>
    <scope>DISRUPTION PHENOTYPE</scope>
    <scope>INDUCTION BY VERNALIZATION</scope>
    <scope>TISSUE SPECIFICITY</scope>
    <scope>SUBCELLULAR LOCATION</scope>
</reference>
<reference key="9">
    <citation type="journal article" date="2008" name="J. Exp. Bot.">
        <title>FLC or not FLC: the other side of vernalization.</title>
        <authorList>
            <person name="Alexandre C.M."/>
            <person name="Hennig L."/>
        </authorList>
    </citation>
    <scope>REVIEW</scope>
</reference>
<gene>
    <name type="primary">AGL19</name>
    <name type="ordered locus">At4g22950</name>
    <name type="ORF">F7H19.130</name>
</gene>